<comment type="function">
    <text evidence="1">Catalyzes the attachment of serine to tRNA(Ser). Is also able to aminoacylate tRNA(Sec) with serine, to form the misacylated tRNA L-seryl-tRNA(Sec), which will be further converted into selenocysteinyl-tRNA(Sec).</text>
</comment>
<comment type="catalytic activity">
    <reaction evidence="1">
        <text>tRNA(Ser) + L-serine + ATP = L-seryl-tRNA(Ser) + AMP + diphosphate + H(+)</text>
        <dbReference type="Rhea" id="RHEA:12292"/>
        <dbReference type="Rhea" id="RHEA-COMP:9669"/>
        <dbReference type="Rhea" id="RHEA-COMP:9703"/>
        <dbReference type="ChEBI" id="CHEBI:15378"/>
        <dbReference type="ChEBI" id="CHEBI:30616"/>
        <dbReference type="ChEBI" id="CHEBI:33019"/>
        <dbReference type="ChEBI" id="CHEBI:33384"/>
        <dbReference type="ChEBI" id="CHEBI:78442"/>
        <dbReference type="ChEBI" id="CHEBI:78533"/>
        <dbReference type="ChEBI" id="CHEBI:456215"/>
        <dbReference type="EC" id="6.1.1.11"/>
    </reaction>
</comment>
<comment type="catalytic activity">
    <reaction evidence="1">
        <text>tRNA(Sec) + L-serine + ATP = L-seryl-tRNA(Sec) + AMP + diphosphate + H(+)</text>
        <dbReference type="Rhea" id="RHEA:42580"/>
        <dbReference type="Rhea" id="RHEA-COMP:9742"/>
        <dbReference type="Rhea" id="RHEA-COMP:10128"/>
        <dbReference type="ChEBI" id="CHEBI:15378"/>
        <dbReference type="ChEBI" id="CHEBI:30616"/>
        <dbReference type="ChEBI" id="CHEBI:33019"/>
        <dbReference type="ChEBI" id="CHEBI:33384"/>
        <dbReference type="ChEBI" id="CHEBI:78442"/>
        <dbReference type="ChEBI" id="CHEBI:78533"/>
        <dbReference type="ChEBI" id="CHEBI:456215"/>
        <dbReference type="EC" id="6.1.1.11"/>
    </reaction>
</comment>
<comment type="pathway">
    <text evidence="1">Aminoacyl-tRNA biosynthesis; selenocysteinyl-tRNA(Sec) biosynthesis; L-seryl-tRNA(Sec) from L-serine and tRNA(Sec): step 1/1.</text>
</comment>
<comment type="subunit">
    <text evidence="1">Homodimer. The tRNA molecule binds across the dimer.</text>
</comment>
<comment type="subcellular location">
    <subcellularLocation>
        <location evidence="1">Cytoplasm</location>
    </subcellularLocation>
</comment>
<comment type="domain">
    <text evidence="1">Consists of two distinct domains, a catalytic core and a N-terminal extension that is involved in tRNA binding.</text>
</comment>
<comment type="similarity">
    <text evidence="1">Belongs to the class-II aminoacyl-tRNA synthetase family. Type-1 seryl-tRNA synthetase subfamily.</text>
</comment>
<organism>
    <name type="scientific">Xanthomonas campestris pv. campestris (strain B100)</name>
    <dbReference type="NCBI Taxonomy" id="509169"/>
    <lineage>
        <taxon>Bacteria</taxon>
        <taxon>Pseudomonadati</taxon>
        <taxon>Pseudomonadota</taxon>
        <taxon>Gammaproteobacteria</taxon>
        <taxon>Lysobacterales</taxon>
        <taxon>Lysobacteraceae</taxon>
        <taxon>Xanthomonas</taxon>
    </lineage>
</organism>
<proteinExistence type="inferred from homology"/>
<feature type="chain" id="PRO_1000098146" description="Serine--tRNA ligase">
    <location>
        <begin position="1"/>
        <end position="426"/>
    </location>
</feature>
<feature type="binding site" evidence="1">
    <location>
        <begin position="233"/>
        <end position="235"/>
    </location>
    <ligand>
        <name>L-serine</name>
        <dbReference type="ChEBI" id="CHEBI:33384"/>
    </ligand>
</feature>
<feature type="binding site" evidence="1">
    <location>
        <begin position="264"/>
        <end position="266"/>
    </location>
    <ligand>
        <name>ATP</name>
        <dbReference type="ChEBI" id="CHEBI:30616"/>
    </ligand>
</feature>
<feature type="binding site" evidence="1">
    <location>
        <position position="287"/>
    </location>
    <ligand>
        <name>L-serine</name>
        <dbReference type="ChEBI" id="CHEBI:33384"/>
    </ligand>
</feature>
<feature type="binding site" evidence="1">
    <location>
        <begin position="351"/>
        <end position="354"/>
    </location>
    <ligand>
        <name>ATP</name>
        <dbReference type="ChEBI" id="CHEBI:30616"/>
    </ligand>
</feature>
<feature type="binding site" evidence="1">
    <location>
        <position position="387"/>
    </location>
    <ligand>
        <name>L-serine</name>
        <dbReference type="ChEBI" id="CHEBI:33384"/>
    </ligand>
</feature>
<gene>
    <name evidence="1" type="primary">serS</name>
    <name type="ordered locus">xcc-b100_2666</name>
</gene>
<sequence>MLDPALLRQHPADLAERLRSTRGFDLNTAELESLESERKRIQVRTQELQSLRNSKSKAIGQAKAKGEDVAALMAEVAGFGDELKASEDALDVIRAQLEGIALGIPNLPAANVPAGKDESENVEQARWGTPRQFDFAVKDHVELGAPHGWLDGETAAKLSGARFTVLRGPIARLHRALAQFMLDLHVGEHGYEETNVPLLVNADSMRGTGQLPKFEDDLFQTEVGDSKRYLIPTSEVPLTNIVRDAIVDAERLPLRMTAHSMCFRAEAGSGGRDTRGMIRQHQFEKVELVTACSPEDSEAEHQRMTRCAEVVLEKLGLPYRKVLLCTGDMGFSAIKTYDLEVWLPSQATYREISSCSNCGDFQARRMQARWRNPASGKPELLHTLNGSGTAVGRAMIAVMENYQNADGSIDVPDALRPYMGGLERIG</sequence>
<dbReference type="EC" id="6.1.1.11" evidence="1"/>
<dbReference type="EMBL" id="AM920689">
    <property type="protein sequence ID" value="CAP52027.1"/>
    <property type="molecule type" value="Genomic_DNA"/>
</dbReference>
<dbReference type="SMR" id="B0RUV8"/>
<dbReference type="KEGG" id="xca:xcc-b100_2666"/>
<dbReference type="HOGENOM" id="CLU_023797_1_1_6"/>
<dbReference type="UniPathway" id="UPA00906">
    <property type="reaction ID" value="UER00895"/>
</dbReference>
<dbReference type="Proteomes" id="UP000001188">
    <property type="component" value="Chromosome"/>
</dbReference>
<dbReference type="GO" id="GO:0005737">
    <property type="term" value="C:cytoplasm"/>
    <property type="evidence" value="ECO:0007669"/>
    <property type="project" value="UniProtKB-SubCell"/>
</dbReference>
<dbReference type="GO" id="GO:0005524">
    <property type="term" value="F:ATP binding"/>
    <property type="evidence" value="ECO:0007669"/>
    <property type="project" value="UniProtKB-UniRule"/>
</dbReference>
<dbReference type="GO" id="GO:0004828">
    <property type="term" value="F:serine-tRNA ligase activity"/>
    <property type="evidence" value="ECO:0007669"/>
    <property type="project" value="UniProtKB-UniRule"/>
</dbReference>
<dbReference type="GO" id="GO:0016260">
    <property type="term" value="P:selenocysteine biosynthetic process"/>
    <property type="evidence" value="ECO:0007669"/>
    <property type="project" value="UniProtKB-UniRule"/>
</dbReference>
<dbReference type="GO" id="GO:0006434">
    <property type="term" value="P:seryl-tRNA aminoacylation"/>
    <property type="evidence" value="ECO:0007669"/>
    <property type="project" value="UniProtKB-UniRule"/>
</dbReference>
<dbReference type="CDD" id="cd00770">
    <property type="entry name" value="SerRS_core"/>
    <property type="match status" value="1"/>
</dbReference>
<dbReference type="Gene3D" id="3.30.930.10">
    <property type="entry name" value="Bira Bifunctional Protein, Domain 2"/>
    <property type="match status" value="1"/>
</dbReference>
<dbReference type="Gene3D" id="1.10.287.40">
    <property type="entry name" value="Serine-tRNA synthetase, tRNA binding domain"/>
    <property type="match status" value="1"/>
</dbReference>
<dbReference type="HAMAP" id="MF_00176">
    <property type="entry name" value="Ser_tRNA_synth_type1"/>
    <property type="match status" value="1"/>
</dbReference>
<dbReference type="InterPro" id="IPR002314">
    <property type="entry name" value="aa-tRNA-synt_IIb"/>
</dbReference>
<dbReference type="InterPro" id="IPR006195">
    <property type="entry name" value="aa-tRNA-synth_II"/>
</dbReference>
<dbReference type="InterPro" id="IPR045864">
    <property type="entry name" value="aa-tRNA-synth_II/BPL/LPL"/>
</dbReference>
<dbReference type="InterPro" id="IPR002317">
    <property type="entry name" value="Ser-tRNA-ligase_type_1"/>
</dbReference>
<dbReference type="InterPro" id="IPR015866">
    <property type="entry name" value="Ser-tRNA-synth_1_N"/>
</dbReference>
<dbReference type="InterPro" id="IPR042103">
    <property type="entry name" value="SerRS_1_N_sf"/>
</dbReference>
<dbReference type="InterPro" id="IPR033729">
    <property type="entry name" value="SerRS_core"/>
</dbReference>
<dbReference type="InterPro" id="IPR010978">
    <property type="entry name" value="tRNA-bd_arm"/>
</dbReference>
<dbReference type="NCBIfam" id="TIGR00414">
    <property type="entry name" value="serS"/>
    <property type="match status" value="1"/>
</dbReference>
<dbReference type="PANTHER" id="PTHR43697:SF1">
    <property type="entry name" value="SERINE--TRNA LIGASE"/>
    <property type="match status" value="1"/>
</dbReference>
<dbReference type="PANTHER" id="PTHR43697">
    <property type="entry name" value="SERYL-TRNA SYNTHETASE"/>
    <property type="match status" value="1"/>
</dbReference>
<dbReference type="Pfam" id="PF02403">
    <property type="entry name" value="Seryl_tRNA_N"/>
    <property type="match status" value="1"/>
</dbReference>
<dbReference type="Pfam" id="PF00587">
    <property type="entry name" value="tRNA-synt_2b"/>
    <property type="match status" value="1"/>
</dbReference>
<dbReference type="PIRSF" id="PIRSF001529">
    <property type="entry name" value="Ser-tRNA-synth_IIa"/>
    <property type="match status" value="1"/>
</dbReference>
<dbReference type="PRINTS" id="PR00981">
    <property type="entry name" value="TRNASYNTHSER"/>
</dbReference>
<dbReference type="SUPFAM" id="SSF55681">
    <property type="entry name" value="Class II aaRS and biotin synthetases"/>
    <property type="match status" value="1"/>
</dbReference>
<dbReference type="SUPFAM" id="SSF46589">
    <property type="entry name" value="tRNA-binding arm"/>
    <property type="match status" value="1"/>
</dbReference>
<dbReference type="PROSITE" id="PS50862">
    <property type="entry name" value="AA_TRNA_LIGASE_II"/>
    <property type="match status" value="1"/>
</dbReference>
<reference key="1">
    <citation type="journal article" date="2008" name="J. Biotechnol.">
        <title>The genome of Xanthomonas campestris pv. campestris B100 and its use for the reconstruction of metabolic pathways involved in xanthan biosynthesis.</title>
        <authorList>
            <person name="Vorhoelter F.-J."/>
            <person name="Schneiker S."/>
            <person name="Goesmann A."/>
            <person name="Krause L."/>
            <person name="Bekel T."/>
            <person name="Kaiser O."/>
            <person name="Linke B."/>
            <person name="Patschkowski T."/>
            <person name="Rueckert C."/>
            <person name="Schmid J."/>
            <person name="Sidhu V.K."/>
            <person name="Sieber V."/>
            <person name="Tauch A."/>
            <person name="Watt S.A."/>
            <person name="Weisshaar B."/>
            <person name="Becker A."/>
            <person name="Niehaus K."/>
            <person name="Puehler A."/>
        </authorList>
    </citation>
    <scope>NUCLEOTIDE SEQUENCE [LARGE SCALE GENOMIC DNA]</scope>
    <source>
        <strain>B100</strain>
    </source>
</reference>
<evidence type="ECO:0000255" key="1">
    <source>
        <dbReference type="HAMAP-Rule" id="MF_00176"/>
    </source>
</evidence>
<name>SYS_XANCB</name>
<keyword id="KW-0030">Aminoacyl-tRNA synthetase</keyword>
<keyword id="KW-0067">ATP-binding</keyword>
<keyword id="KW-0963">Cytoplasm</keyword>
<keyword id="KW-0436">Ligase</keyword>
<keyword id="KW-0547">Nucleotide-binding</keyword>
<keyword id="KW-0648">Protein biosynthesis</keyword>
<protein>
    <recommendedName>
        <fullName evidence="1">Serine--tRNA ligase</fullName>
        <ecNumber evidence="1">6.1.1.11</ecNumber>
    </recommendedName>
    <alternativeName>
        <fullName evidence="1">Seryl-tRNA synthetase</fullName>
        <shortName evidence="1">SerRS</shortName>
    </alternativeName>
    <alternativeName>
        <fullName evidence="1">Seryl-tRNA(Ser/Sec) synthetase</fullName>
    </alternativeName>
</protein>
<accession>B0RUV8</accession>